<gene>
    <name evidence="1" type="primary">rplJ</name>
    <name type="ordered locus">Avin_06150</name>
</gene>
<dbReference type="EMBL" id="CP001157">
    <property type="protein sequence ID" value="ACO76866.1"/>
    <property type="molecule type" value="Genomic_DNA"/>
</dbReference>
<dbReference type="RefSeq" id="WP_012699294.1">
    <property type="nucleotide sequence ID" value="NZ_CP144736.1"/>
</dbReference>
<dbReference type="STRING" id="322710.Avin_06150"/>
<dbReference type="EnsemblBacteria" id="ACO76866">
    <property type="protein sequence ID" value="ACO76866"/>
    <property type="gene ID" value="Avin_06150"/>
</dbReference>
<dbReference type="GeneID" id="88184027"/>
<dbReference type="KEGG" id="avn:Avin_06150"/>
<dbReference type="eggNOG" id="COG0244">
    <property type="taxonomic scope" value="Bacteria"/>
</dbReference>
<dbReference type="HOGENOM" id="CLU_092227_0_2_6"/>
<dbReference type="OrthoDB" id="9808307at2"/>
<dbReference type="Proteomes" id="UP000002424">
    <property type="component" value="Chromosome"/>
</dbReference>
<dbReference type="GO" id="GO:0015934">
    <property type="term" value="C:large ribosomal subunit"/>
    <property type="evidence" value="ECO:0007669"/>
    <property type="project" value="InterPro"/>
</dbReference>
<dbReference type="GO" id="GO:0070180">
    <property type="term" value="F:large ribosomal subunit rRNA binding"/>
    <property type="evidence" value="ECO:0007669"/>
    <property type="project" value="UniProtKB-UniRule"/>
</dbReference>
<dbReference type="GO" id="GO:0003735">
    <property type="term" value="F:structural constituent of ribosome"/>
    <property type="evidence" value="ECO:0007669"/>
    <property type="project" value="InterPro"/>
</dbReference>
<dbReference type="GO" id="GO:0006412">
    <property type="term" value="P:translation"/>
    <property type="evidence" value="ECO:0007669"/>
    <property type="project" value="UniProtKB-UniRule"/>
</dbReference>
<dbReference type="CDD" id="cd05797">
    <property type="entry name" value="Ribosomal_L10"/>
    <property type="match status" value="1"/>
</dbReference>
<dbReference type="FunFam" id="3.30.70.1730:FF:000001">
    <property type="entry name" value="50S ribosomal protein L10"/>
    <property type="match status" value="1"/>
</dbReference>
<dbReference type="Gene3D" id="3.30.70.1730">
    <property type="match status" value="1"/>
</dbReference>
<dbReference type="Gene3D" id="6.10.250.2350">
    <property type="match status" value="1"/>
</dbReference>
<dbReference type="HAMAP" id="MF_00362">
    <property type="entry name" value="Ribosomal_uL10"/>
    <property type="match status" value="1"/>
</dbReference>
<dbReference type="InterPro" id="IPR001790">
    <property type="entry name" value="Ribosomal_uL10"/>
</dbReference>
<dbReference type="InterPro" id="IPR043141">
    <property type="entry name" value="Ribosomal_uL10-like_sf"/>
</dbReference>
<dbReference type="InterPro" id="IPR022973">
    <property type="entry name" value="Ribosomal_uL10_bac"/>
</dbReference>
<dbReference type="InterPro" id="IPR047865">
    <property type="entry name" value="Ribosomal_uL10_bac_type"/>
</dbReference>
<dbReference type="InterPro" id="IPR002363">
    <property type="entry name" value="Ribosomal_uL10_CS_bac"/>
</dbReference>
<dbReference type="NCBIfam" id="NF000955">
    <property type="entry name" value="PRK00099.1-1"/>
    <property type="match status" value="1"/>
</dbReference>
<dbReference type="PANTHER" id="PTHR11560">
    <property type="entry name" value="39S RIBOSOMAL PROTEIN L10, MITOCHONDRIAL"/>
    <property type="match status" value="1"/>
</dbReference>
<dbReference type="Pfam" id="PF00466">
    <property type="entry name" value="Ribosomal_L10"/>
    <property type="match status" value="1"/>
</dbReference>
<dbReference type="SUPFAM" id="SSF160369">
    <property type="entry name" value="Ribosomal protein L10-like"/>
    <property type="match status" value="1"/>
</dbReference>
<dbReference type="PROSITE" id="PS01109">
    <property type="entry name" value="RIBOSOMAL_L10"/>
    <property type="match status" value="1"/>
</dbReference>
<accession>C1DKK3</accession>
<keyword id="KW-0687">Ribonucleoprotein</keyword>
<keyword id="KW-0689">Ribosomal protein</keyword>
<keyword id="KW-0694">RNA-binding</keyword>
<keyword id="KW-0699">rRNA-binding</keyword>
<comment type="function">
    <text evidence="1">Forms part of the ribosomal stalk, playing a central role in the interaction of the ribosome with GTP-bound translation factors.</text>
</comment>
<comment type="subunit">
    <text evidence="1">Part of the ribosomal stalk of the 50S ribosomal subunit. The N-terminus interacts with L11 and the large rRNA to form the base of the stalk. The C-terminus forms an elongated spine to which L12 dimers bind in a sequential fashion forming a multimeric L10(L12)X complex.</text>
</comment>
<comment type="similarity">
    <text evidence="1">Belongs to the universal ribosomal protein uL10 family.</text>
</comment>
<proteinExistence type="inferred from homology"/>
<evidence type="ECO:0000255" key="1">
    <source>
        <dbReference type="HAMAP-Rule" id="MF_00362"/>
    </source>
</evidence>
<evidence type="ECO:0000305" key="2"/>
<organism>
    <name type="scientific">Azotobacter vinelandii (strain DJ / ATCC BAA-1303)</name>
    <dbReference type="NCBI Taxonomy" id="322710"/>
    <lineage>
        <taxon>Bacteria</taxon>
        <taxon>Pseudomonadati</taxon>
        <taxon>Pseudomonadota</taxon>
        <taxon>Gammaproteobacteria</taxon>
        <taxon>Pseudomonadales</taxon>
        <taxon>Pseudomonadaceae</taxon>
        <taxon>Azotobacter</taxon>
    </lineage>
</organism>
<protein>
    <recommendedName>
        <fullName evidence="1">Large ribosomal subunit protein uL10</fullName>
    </recommendedName>
    <alternativeName>
        <fullName evidence="2">50S ribosomal protein L10</fullName>
    </alternativeName>
</protein>
<sequence length="166" mass="17545">MAIKLEDKKAIVAEVNEAAKAALSAVVADARGVTVGAMTGLRKEAREAGVYVRVVRNTLARRAVAGTQFEILNDAFKGPTLIAFSNEHPGAAARIFKEFAKGQDKFEIKAAAFEGQFLAANQIDVLATLPTYNEAVAQLMSVIQGATSKLARTLAAIRDQKEGAAA</sequence>
<feature type="chain" id="PRO_1000205436" description="Large ribosomal subunit protein uL10">
    <location>
        <begin position="1"/>
        <end position="166"/>
    </location>
</feature>
<name>RL10_AZOVD</name>
<reference key="1">
    <citation type="journal article" date="2009" name="J. Bacteriol.">
        <title>Genome sequence of Azotobacter vinelandii, an obligate aerobe specialized to support diverse anaerobic metabolic processes.</title>
        <authorList>
            <person name="Setubal J.C."/>
            <person name="Dos Santos P."/>
            <person name="Goldman B.S."/>
            <person name="Ertesvaag H."/>
            <person name="Espin G."/>
            <person name="Rubio L.M."/>
            <person name="Valla S."/>
            <person name="Almeida N.F."/>
            <person name="Balasubramanian D."/>
            <person name="Cromes L."/>
            <person name="Curatti L."/>
            <person name="Du Z."/>
            <person name="Godsy E."/>
            <person name="Goodner B."/>
            <person name="Hellner-Burris K."/>
            <person name="Hernandez J.A."/>
            <person name="Houmiel K."/>
            <person name="Imperial J."/>
            <person name="Kennedy C."/>
            <person name="Larson T.J."/>
            <person name="Latreille P."/>
            <person name="Ligon L.S."/>
            <person name="Lu J."/>
            <person name="Maerk M."/>
            <person name="Miller N.M."/>
            <person name="Norton S."/>
            <person name="O'Carroll I.P."/>
            <person name="Paulsen I."/>
            <person name="Raulfs E.C."/>
            <person name="Roemer R."/>
            <person name="Rosser J."/>
            <person name="Segura D."/>
            <person name="Slater S."/>
            <person name="Stricklin S.L."/>
            <person name="Studholme D.J."/>
            <person name="Sun J."/>
            <person name="Viana C.J."/>
            <person name="Wallin E."/>
            <person name="Wang B."/>
            <person name="Wheeler C."/>
            <person name="Zhu H."/>
            <person name="Dean D.R."/>
            <person name="Dixon R."/>
            <person name="Wood D."/>
        </authorList>
    </citation>
    <scope>NUCLEOTIDE SEQUENCE [LARGE SCALE GENOMIC DNA]</scope>
    <source>
        <strain>DJ / ATCC BAA-1303</strain>
    </source>
</reference>